<reference key="1">
    <citation type="submission" date="2003-07" db="EMBL/GenBank/DDBJ databases">
        <authorList>
            <consortium name="NIH - Zebrafish Gene Collection (ZGC) project"/>
        </authorList>
    </citation>
    <scope>NUCLEOTIDE SEQUENCE [LARGE SCALE MRNA]</scope>
    <source>
        <tissue>Kidney</tissue>
    </source>
</reference>
<keyword id="KW-0963">Cytoplasm</keyword>
<keyword id="KW-0396">Initiation factor</keyword>
<keyword id="KW-0648">Protein biosynthesis</keyword>
<keyword id="KW-1185">Reference proteome</keyword>
<name>EIF3L_DANRE</name>
<organism>
    <name type="scientific">Danio rerio</name>
    <name type="common">Zebrafish</name>
    <name type="synonym">Brachydanio rerio</name>
    <dbReference type="NCBI Taxonomy" id="7955"/>
    <lineage>
        <taxon>Eukaryota</taxon>
        <taxon>Metazoa</taxon>
        <taxon>Chordata</taxon>
        <taxon>Craniata</taxon>
        <taxon>Vertebrata</taxon>
        <taxon>Euteleostomi</taxon>
        <taxon>Actinopterygii</taxon>
        <taxon>Neopterygii</taxon>
        <taxon>Teleostei</taxon>
        <taxon>Ostariophysi</taxon>
        <taxon>Cypriniformes</taxon>
        <taxon>Danionidae</taxon>
        <taxon>Danioninae</taxon>
        <taxon>Danio</taxon>
    </lineage>
</organism>
<sequence>MSYPAEEEDVNYDPYSYPNDYDYHTGDPKADLAYERQYEHQQTYHVIPEVIKNFLQYFHKTISDLIDQKVYELQANRVSSESIEQKIYEIQDVYENSWNKLTDRFFKTSPWPEAEAIASLVGNDAVFLILYKELYYRHIYAKVSGGPTLDQRFESYYNYCNLFNYILNADGPAPLELPNQWLWDIIDEFIYQFQSFSQYRCKTAKKSEEEIEFLRNNPKIWNVHSVLNVLHSLVDKSNINRQLEVYTSGGDPESVAGEYGRHSLYKMLGYFSLVGLLRLHSLLGDYYQAIKVLENIELNKKSMYSRVPECQITTYYYVGFAYLMMRRYQDAIRVFANILLYIQRTRNMFQRTTYKYEMINKQNEQMHGLLAIALTMYPMRIDESIHTQLREKYGDKMLRMQKGDLQVFEELFSFACPKFLSPVVPNYENVHPNYHKEPFQQQLKVFAEEVQQQAQLSTIRSFLKLYTTMPVAKLAGFLDMSEQEFRIQLLVFKHKMKNLVWTSGISALDGEFQSASEVDFYIDKDMIHIADTKVARRYGDFFIRQIHKFEELNRTLKKMPLNTGASISSSSTSRAT</sequence>
<accession>Q7T2A5</accession>
<evidence type="ECO:0000255" key="1">
    <source>
        <dbReference type="HAMAP-Rule" id="MF_03011"/>
    </source>
</evidence>
<evidence type="ECO:0000255" key="2">
    <source>
        <dbReference type="PROSITE-ProRule" id="PRU01185"/>
    </source>
</evidence>
<evidence type="ECO:0000305" key="3"/>
<comment type="function">
    <text evidence="1">Component of the eukaryotic translation initiation factor 3 (eIF-3) complex, which is involved in protein synthesis of a specialized repertoire of mRNAs and, together with other initiation factors, stimulates binding of mRNA and methionyl-tRNAi to the 40S ribosome. The eIF-3 complex specifically targets and initiates translation of a subset of mRNAs involved in cell proliferation.</text>
</comment>
<comment type="subunit">
    <text evidence="1">Component of the eukaryotic translation initiation factor 3 (eIF-3) complex, which is composed of 13 subunits: eif3a, eif3b, eif3c, eif3d, eif3e, eif3f, eif3g, eif3h, eif3i, eif3j, eif3k, eif3l and eif3m.</text>
</comment>
<comment type="subcellular location">
    <subcellularLocation>
        <location evidence="3">Cytoplasm</location>
    </subcellularLocation>
</comment>
<comment type="similarity">
    <text evidence="1">Belongs to the eIF-3 subunit L family.</text>
</comment>
<gene>
    <name type="primary">eif3l</name>
    <name type="synonym">eif3eip</name>
    <name type="synonym">eif3s6ip</name>
</gene>
<protein>
    <recommendedName>
        <fullName evidence="1">Eukaryotic translation initiation factor 3 subunit L</fullName>
        <shortName evidence="1">eIF3l</shortName>
    </recommendedName>
    <alternativeName>
        <fullName evidence="1">Eukaryotic translation initiation factor 3 subunit 6-interacting protein</fullName>
    </alternativeName>
    <alternativeName>
        <fullName evidence="1">Eukaryotic translation initiation factor 3 subunit E-interacting protein</fullName>
    </alternativeName>
</protein>
<dbReference type="EMBL" id="BC054626">
    <property type="protein sequence ID" value="AAH54626.1"/>
    <property type="molecule type" value="mRNA"/>
</dbReference>
<dbReference type="RefSeq" id="NP_998293.1">
    <property type="nucleotide sequence ID" value="NM_213128.1"/>
</dbReference>
<dbReference type="SMR" id="Q7T2A5"/>
<dbReference type="FunCoup" id="Q7T2A5">
    <property type="interactions" value="2568"/>
</dbReference>
<dbReference type="STRING" id="7955.ENSDARP00000134724"/>
<dbReference type="PaxDb" id="7955-ENSDARP00000090402"/>
<dbReference type="Ensembl" id="ENSDART00000161017">
    <property type="protein sequence ID" value="ENSDARP00000134724"/>
    <property type="gene ID" value="ENSDARG00000101082"/>
</dbReference>
<dbReference type="GeneID" id="406402"/>
<dbReference type="KEGG" id="dre:406402"/>
<dbReference type="AGR" id="ZFIN:ZDB-GENE-040426-2138"/>
<dbReference type="CTD" id="406402"/>
<dbReference type="ZFIN" id="ZDB-GENE-040426-2138">
    <property type="gene designation" value="eif3s6ip"/>
</dbReference>
<dbReference type="eggNOG" id="KOG3677">
    <property type="taxonomic scope" value="Eukaryota"/>
</dbReference>
<dbReference type="HOGENOM" id="CLU_029210_0_1_1"/>
<dbReference type="InParanoid" id="Q7T2A5"/>
<dbReference type="OMA" id="AGWFIRN"/>
<dbReference type="OrthoDB" id="15082at2759"/>
<dbReference type="PhylomeDB" id="Q7T2A5"/>
<dbReference type="TreeFam" id="TF101523"/>
<dbReference type="Reactome" id="R-DRE-156827">
    <property type="pathway name" value="L13a-mediated translational silencing of Ceruloplasmin expression"/>
</dbReference>
<dbReference type="Reactome" id="R-DRE-72689">
    <property type="pathway name" value="Formation of a pool of free 40S subunits"/>
</dbReference>
<dbReference type="Reactome" id="R-DRE-72695">
    <property type="pathway name" value="Formation of the ternary complex, and subsequently, the 43S complex"/>
</dbReference>
<dbReference type="Reactome" id="R-DRE-72702">
    <property type="pathway name" value="Ribosomal scanning and start codon recognition"/>
</dbReference>
<dbReference type="PRO" id="PR:Q7T2A5"/>
<dbReference type="Proteomes" id="UP000000437">
    <property type="component" value="Chromosome 13"/>
</dbReference>
<dbReference type="Bgee" id="ENSDARG00000101082">
    <property type="expression patterns" value="Expressed in presomitic mesoderm and 28 other cell types or tissues"/>
</dbReference>
<dbReference type="GO" id="GO:0016282">
    <property type="term" value="C:eukaryotic 43S preinitiation complex"/>
    <property type="evidence" value="ECO:0007669"/>
    <property type="project" value="UniProtKB-UniRule"/>
</dbReference>
<dbReference type="GO" id="GO:0033290">
    <property type="term" value="C:eukaryotic 48S preinitiation complex"/>
    <property type="evidence" value="ECO:0007669"/>
    <property type="project" value="UniProtKB-UniRule"/>
</dbReference>
<dbReference type="GO" id="GO:0005852">
    <property type="term" value="C:eukaryotic translation initiation factor 3 complex"/>
    <property type="evidence" value="ECO:0000250"/>
    <property type="project" value="UniProtKB"/>
</dbReference>
<dbReference type="GO" id="GO:0003743">
    <property type="term" value="F:translation initiation factor activity"/>
    <property type="evidence" value="ECO:0007669"/>
    <property type="project" value="UniProtKB-UniRule"/>
</dbReference>
<dbReference type="GO" id="GO:0001732">
    <property type="term" value="P:formation of cytoplasmic translation initiation complex"/>
    <property type="evidence" value="ECO:0007669"/>
    <property type="project" value="UniProtKB-UniRule"/>
</dbReference>
<dbReference type="GO" id="GO:0006413">
    <property type="term" value="P:translational initiation"/>
    <property type="evidence" value="ECO:0000250"/>
    <property type="project" value="UniProtKB"/>
</dbReference>
<dbReference type="HAMAP" id="MF_03011">
    <property type="entry name" value="eIF3l"/>
    <property type="match status" value="1"/>
</dbReference>
<dbReference type="InterPro" id="IPR019382">
    <property type="entry name" value="eIF3l"/>
</dbReference>
<dbReference type="InterPro" id="IPR000717">
    <property type="entry name" value="PCI_dom"/>
</dbReference>
<dbReference type="InterPro" id="IPR011990">
    <property type="entry name" value="TPR-like_helical_dom_sf"/>
</dbReference>
<dbReference type="PANTHER" id="PTHR13242">
    <property type="entry name" value="EUKARYOTIC TRANSLATION INITIATION FACTOR 3"/>
    <property type="match status" value="1"/>
</dbReference>
<dbReference type="PANTHER" id="PTHR13242:SF0">
    <property type="entry name" value="EUKARYOTIC TRANSLATION INITIATION FACTOR 3 SUBUNIT L"/>
    <property type="match status" value="1"/>
</dbReference>
<dbReference type="Pfam" id="PF10255">
    <property type="entry name" value="Paf67"/>
    <property type="match status" value="1"/>
</dbReference>
<dbReference type="SUPFAM" id="SSF48452">
    <property type="entry name" value="TPR-like"/>
    <property type="match status" value="1"/>
</dbReference>
<dbReference type="PROSITE" id="PS50250">
    <property type="entry name" value="PCI"/>
    <property type="match status" value="1"/>
</dbReference>
<feature type="chain" id="PRO_0000297495" description="Eukaryotic translation initiation factor 3 subunit L">
    <location>
        <begin position="1"/>
        <end position="576"/>
    </location>
</feature>
<feature type="domain" description="PCI" evidence="2">
    <location>
        <begin position="330"/>
        <end position="536"/>
    </location>
</feature>
<proteinExistence type="evidence at transcript level"/>